<protein>
    <recommendedName>
        <fullName>EKC/KEOPS complex subunit SPAC4H3.13</fullName>
    </recommendedName>
    <alternativeName>
        <fullName>Protein PCC1 homolog</fullName>
    </alternativeName>
</protein>
<reference key="1">
    <citation type="journal article" date="2002" name="Nature">
        <title>The genome sequence of Schizosaccharomyces pombe.</title>
        <authorList>
            <person name="Wood V."/>
            <person name="Gwilliam R."/>
            <person name="Rajandream M.A."/>
            <person name="Lyne M.H."/>
            <person name="Lyne R."/>
            <person name="Stewart A."/>
            <person name="Sgouros J.G."/>
            <person name="Peat N."/>
            <person name="Hayles J."/>
            <person name="Baker S.G."/>
            <person name="Basham D."/>
            <person name="Bowman S."/>
            <person name="Brooks K."/>
            <person name="Brown D."/>
            <person name="Brown S."/>
            <person name="Chillingworth T."/>
            <person name="Churcher C.M."/>
            <person name="Collins M."/>
            <person name="Connor R."/>
            <person name="Cronin A."/>
            <person name="Davis P."/>
            <person name="Feltwell T."/>
            <person name="Fraser A."/>
            <person name="Gentles S."/>
            <person name="Goble A."/>
            <person name="Hamlin N."/>
            <person name="Harris D.E."/>
            <person name="Hidalgo J."/>
            <person name="Hodgson G."/>
            <person name="Holroyd S."/>
            <person name="Hornsby T."/>
            <person name="Howarth S."/>
            <person name="Huckle E.J."/>
            <person name="Hunt S."/>
            <person name="Jagels K."/>
            <person name="James K.D."/>
            <person name="Jones L."/>
            <person name="Jones M."/>
            <person name="Leather S."/>
            <person name="McDonald S."/>
            <person name="McLean J."/>
            <person name="Mooney P."/>
            <person name="Moule S."/>
            <person name="Mungall K.L."/>
            <person name="Murphy L.D."/>
            <person name="Niblett D."/>
            <person name="Odell C."/>
            <person name="Oliver K."/>
            <person name="O'Neil S."/>
            <person name="Pearson D."/>
            <person name="Quail M.A."/>
            <person name="Rabbinowitsch E."/>
            <person name="Rutherford K.M."/>
            <person name="Rutter S."/>
            <person name="Saunders D."/>
            <person name="Seeger K."/>
            <person name="Sharp S."/>
            <person name="Skelton J."/>
            <person name="Simmonds M.N."/>
            <person name="Squares R."/>
            <person name="Squares S."/>
            <person name="Stevens K."/>
            <person name="Taylor K."/>
            <person name="Taylor R.G."/>
            <person name="Tivey A."/>
            <person name="Walsh S.V."/>
            <person name="Warren T."/>
            <person name="Whitehead S."/>
            <person name="Woodward J.R."/>
            <person name="Volckaert G."/>
            <person name="Aert R."/>
            <person name="Robben J."/>
            <person name="Grymonprez B."/>
            <person name="Weltjens I."/>
            <person name="Vanstreels E."/>
            <person name="Rieger M."/>
            <person name="Schaefer M."/>
            <person name="Mueller-Auer S."/>
            <person name="Gabel C."/>
            <person name="Fuchs M."/>
            <person name="Duesterhoeft A."/>
            <person name="Fritzc C."/>
            <person name="Holzer E."/>
            <person name="Moestl D."/>
            <person name="Hilbert H."/>
            <person name="Borzym K."/>
            <person name="Langer I."/>
            <person name="Beck A."/>
            <person name="Lehrach H."/>
            <person name="Reinhardt R."/>
            <person name="Pohl T.M."/>
            <person name="Eger P."/>
            <person name="Zimmermann W."/>
            <person name="Wedler H."/>
            <person name="Wambutt R."/>
            <person name="Purnelle B."/>
            <person name="Goffeau A."/>
            <person name="Cadieu E."/>
            <person name="Dreano S."/>
            <person name="Gloux S."/>
            <person name="Lelaure V."/>
            <person name="Mottier S."/>
            <person name="Galibert F."/>
            <person name="Aves S.J."/>
            <person name="Xiang Z."/>
            <person name="Hunt C."/>
            <person name="Moore K."/>
            <person name="Hurst S.M."/>
            <person name="Lucas M."/>
            <person name="Rochet M."/>
            <person name="Gaillardin C."/>
            <person name="Tallada V.A."/>
            <person name="Garzon A."/>
            <person name="Thode G."/>
            <person name="Daga R.R."/>
            <person name="Cruzado L."/>
            <person name="Jimenez J."/>
            <person name="Sanchez M."/>
            <person name="del Rey F."/>
            <person name="Benito J."/>
            <person name="Dominguez A."/>
            <person name="Revuelta J.L."/>
            <person name="Moreno S."/>
            <person name="Armstrong J."/>
            <person name="Forsburg S.L."/>
            <person name="Cerutti L."/>
            <person name="Lowe T."/>
            <person name="McCombie W.R."/>
            <person name="Paulsen I."/>
            <person name="Potashkin J."/>
            <person name="Shpakovski G.V."/>
            <person name="Ussery D."/>
            <person name="Barrell B.G."/>
            <person name="Nurse P."/>
        </authorList>
    </citation>
    <scope>NUCLEOTIDE SEQUENCE [LARGE SCALE GENOMIC DNA]</scope>
    <source>
        <strain>972 / ATCC 24843</strain>
    </source>
</reference>
<reference key="2">
    <citation type="journal article" date="2006" name="Nat. Biotechnol.">
        <title>ORFeome cloning and global analysis of protein localization in the fission yeast Schizosaccharomyces pombe.</title>
        <authorList>
            <person name="Matsuyama A."/>
            <person name="Arai R."/>
            <person name="Yashiroda Y."/>
            <person name="Shirai A."/>
            <person name="Kamata A."/>
            <person name="Sekido S."/>
            <person name="Kobayashi Y."/>
            <person name="Hashimoto A."/>
            <person name="Hamamoto M."/>
            <person name="Hiraoka Y."/>
            <person name="Horinouchi S."/>
            <person name="Yoshida M."/>
        </authorList>
    </citation>
    <scope>SUBCELLULAR LOCATION [LARGE SCALE ANALYSIS]</scope>
</reference>
<keyword id="KW-0010">Activator</keyword>
<keyword id="KW-0158">Chromosome</keyword>
<keyword id="KW-0963">Cytoplasm</keyword>
<keyword id="KW-0539">Nucleus</keyword>
<keyword id="KW-1185">Reference proteome</keyword>
<keyword id="KW-0779">Telomere</keyword>
<keyword id="KW-0804">Transcription</keyword>
<keyword id="KW-0805">Transcription regulation</keyword>
<keyword id="KW-0819">tRNA processing</keyword>
<evidence type="ECO:0000250" key="1"/>
<evidence type="ECO:0000269" key="2">
    <source>
    </source>
</evidence>
<evidence type="ECO:0000305" key="3"/>
<comment type="function">
    <text evidence="1">Component of the EKC/KEOPS complex that is required for the formation of a threonylcarbamoyl group on adenosine at position 37 (t(6)A37) in tRNAs that read codons beginning with adenine. The complex is probably involved in the transfer of the threonylcarbamoyl moiety of threonylcarbamoyl-AMP (TC-AMP) to the N6 group of A37. SPAC4H3.13/PCC1 functions as a dimerization module for the complex. The EKC/KEOPS complex also promotes both telomere uncapping and telomere elongation. The complex is required for efficient recruitment of transcriptional coactivators (By similarity).</text>
</comment>
<comment type="subunit">
    <text evidence="1">Component of the EKC/KEOPS complex composed of at least of SPAP27G11.07c/BUD32, cgi121, gon7, pgp2 and SPAC4H3.13/PCC1; the whole complex dimerizes.</text>
</comment>
<comment type="subcellular location">
    <subcellularLocation>
        <location evidence="2">Cytoplasm</location>
    </subcellularLocation>
    <subcellularLocation>
        <location evidence="2">Nucleus</location>
    </subcellularLocation>
    <subcellularLocation>
        <location evidence="1">Chromosome</location>
        <location evidence="1">Telomere</location>
    </subcellularLocation>
</comment>
<comment type="similarity">
    <text evidence="3">Belongs to the CTAG/PCC1 family.</text>
</comment>
<name>PCC1_SCHPO</name>
<accession>Q10220</accession>
<organism>
    <name type="scientific">Schizosaccharomyces pombe (strain 972 / ATCC 24843)</name>
    <name type="common">Fission yeast</name>
    <dbReference type="NCBI Taxonomy" id="284812"/>
    <lineage>
        <taxon>Eukaryota</taxon>
        <taxon>Fungi</taxon>
        <taxon>Dikarya</taxon>
        <taxon>Ascomycota</taxon>
        <taxon>Taphrinomycotina</taxon>
        <taxon>Schizosaccharomycetes</taxon>
        <taxon>Schizosaccharomycetales</taxon>
        <taxon>Schizosaccharomycetaceae</taxon>
        <taxon>Schizosaccharomyces</taxon>
    </lineage>
</organism>
<proteinExistence type="inferred from homology"/>
<dbReference type="EMBL" id="CU329670">
    <property type="protein sequence ID" value="CAA93352.1"/>
    <property type="molecule type" value="Genomic_DNA"/>
</dbReference>
<dbReference type="PIR" id="T38893">
    <property type="entry name" value="T38893"/>
</dbReference>
<dbReference type="SMR" id="Q10220"/>
<dbReference type="BioGRID" id="279837">
    <property type="interactions" value="1"/>
</dbReference>
<dbReference type="FunCoup" id="Q10220">
    <property type="interactions" value="6"/>
</dbReference>
<dbReference type="STRING" id="284812.Q10220"/>
<dbReference type="iPTMnet" id="Q10220"/>
<dbReference type="PaxDb" id="4896-SPAC4H3.13.1"/>
<dbReference type="EnsemblFungi" id="SPAC4H3.13.1">
    <property type="protein sequence ID" value="SPAC4H3.13.1:pep"/>
    <property type="gene ID" value="SPAC4H3.13"/>
</dbReference>
<dbReference type="KEGG" id="spo:2543415"/>
<dbReference type="PomBase" id="SPAC4H3.13"/>
<dbReference type="VEuPathDB" id="FungiDB:SPAC4H3.13"/>
<dbReference type="HOGENOM" id="CLU_113770_4_1_1"/>
<dbReference type="InParanoid" id="Q10220"/>
<dbReference type="OMA" id="CMQVLAP"/>
<dbReference type="PhylomeDB" id="Q10220"/>
<dbReference type="PRO" id="PR:Q10220"/>
<dbReference type="Proteomes" id="UP000002485">
    <property type="component" value="Chromosome I"/>
</dbReference>
<dbReference type="GO" id="GO:0000781">
    <property type="term" value="C:chromosome, telomeric region"/>
    <property type="evidence" value="ECO:0007669"/>
    <property type="project" value="UniProtKB-SubCell"/>
</dbReference>
<dbReference type="GO" id="GO:0005829">
    <property type="term" value="C:cytosol"/>
    <property type="evidence" value="ECO:0007005"/>
    <property type="project" value="PomBase"/>
</dbReference>
<dbReference type="GO" id="GO:0000408">
    <property type="term" value="C:EKC/KEOPS complex"/>
    <property type="evidence" value="ECO:0000318"/>
    <property type="project" value="GO_Central"/>
</dbReference>
<dbReference type="GO" id="GO:0005634">
    <property type="term" value="C:nucleus"/>
    <property type="evidence" value="ECO:0007005"/>
    <property type="project" value="PomBase"/>
</dbReference>
<dbReference type="GO" id="GO:0070525">
    <property type="term" value="P:tRNA threonylcarbamoyladenosine metabolic process"/>
    <property type="evidence" value="ECO:0000318"/>
    <property type="project" value="GO_Central"/>
</dbReference>
<dbReference type="GO" id="GO:0002949">
    <property type="term" value="P:tRNA threonylcarbamoyladenosine modification"/>
    <property type="evidence" value="ECO:0000266"/>
    <property type="project" value="PomBase"/>
</dbReference>
<dbReference type="FunFam" id="3.30.310.50:FF:000005">
    <property type="entry name" value="L antigen family member 3"/>
    <property type="match status" value="1"/>
</dbReference>
<dbReference type="Gene3D" id="3.30.310.50">
    <property type="entry name" value="Alpha-D-phosphohexomutase, C-terminal domain"/>
    <property type="match status" value="1"/>
</dbReference>
<dbReference type="InterPro" id="IPR015419">
    <property type="entry name" value="CTAG/Pcc1"/>
</dbReference>
<dbReference type="PANTHER" id="PTHR31283">
    <property type="entry name" value="EKC/KEOPS COMPLEX SUBUNIT PCC1 FAMILY MEMBER"/>
    <property type="match status" value="1"/>
</dbReference>
<dbReference type="PANTHER" id="PTHR31283:SF5">
    <property type="entry name" value="EKC_KEOPS COMPLEX SUBUNIT LAGE3"/>
    <property type="match status" value="1"/>
</dbReference>
<dbReference type="Pfam" id="PF09341">
    <property type="entry name" value="Pcc1"/>
    <property type="match status" value="1"/>
</dbReference>
<feature type="chain" id="PRO_0000218926" description="EKC/KEOPS complex subunit SPAC4H3.13">
    <location>
        <begin position="1"/>
        <end position="88"/>
    </location>
</feature>
<gene>
    <name type="ORF">SPAC4H3.13</name>
</gene>
<sequence>MSEMIVLPHKVTVKVPLASRVDAERCLQVLAPDRELKEELVQRNLFVDDNYLVVNYSCSSARMTRVTVNSLFENLYLIIDTMHELSSL</sequence>